<protein>
    <recommendedName>
        <fullName>Precorrin-2 dehydrogenase</fullName>
        <shortName>Mba_PC2_DH</shortName>
        <ecNumber>1.3.1.76</ecNumber>
    </recommendedName>
</protein>
<evidence type="ECO:0000250" key="1"/>
<evidence type="ECO:0000269" key="2">
    <source>
    </source>
</evidence>
<evidence type="ECO:0000305" key="3"/>
<dbReference type="EC" id="1.3.1.76"/>
<dbReference type="EMBL" id="CP000099">
    <property type="protein sequence ID" value="AAZ70418.1"/>
    <property type="molecule type" value="Genomic_DNA"/>
</dbReference>
<dbReference type="SMR" id="Q46CH4"/>
<dbReference type="STRING" id="269797.Mbar_A1461"/>
<dbReference type="PaxDb" id="269797-Mbar_A1461"/>
<dbReference type="KEGG" id="mba:Mbar_A1461"/>
<dbReference type="eggNOG" id="arCOG01044">
    <property type="taxonomic scope" value="Archaea"/>
</dbReference>
<dbReference type="HOGENOM" id="CLU_011276_8_1_2"/>
<dbReference type="OrthoDB" id="10510at2157"/>
<dbReference type="UniPathway" id="UPA00262">
    <property type="reaction ID" value="UER00222"/>
</dbReference>
<dbReference type="GO" id="GO:0004325">
    <property type="term" value="F:ferrochelatase activity"/>
    <property type="evidence" value="ECO:0007669"/>
    <property type="project" value="InterPro"/>
</dbReference>
<dbReference type="GO" id="GO:0043115">
    <property type="term" value="F:precorrin-2 dehydrogenase activity"/>
    <property type="evidence" value="ECO:0000314"/>
    <property type="project" value="UniProtKB"/>
</dbReference>
<dbReference type="GO" id="GO:0019354">
    <property type="term" value="P:siroheme biosynthetic process"/>
    <property type="evidence" value="ECO:0000314"/>
    <property type="project" value="UniProtKB"/>
</dbReference>
<dbReference type="Gene3D" id="3.40.50.720">
    <property type="entry name" value="NAD(P)-binding Rossmann-like Domain"/>
    <property type="match status" value="1"/>
</dbReference>
<dbReference type="Gene3D" id="1.10.8.610">
    <property type="entry name" value="SirC, precorrin-2 dehydrogenase, C-terminal helical domain-like"/>
    <property type="match status" value="1"/>
</dbReference>
<dbReference type="InterPro" id="IPR028161">
    <property type="entry name" value="Met8-like"/>
</dbReference>
<dbReference type="InterPro" id="IPR036291">
    <property type="entry name" value="NAD(P)-bd_dom_sf"/>
</dbReference>
<dbReference type="InterPro" id="IPR042518">
    <property type="entry name" value="SirC_C"/>
</dbReference>
<dbReference type="InterPro" id="IPR006367">
    <property type="entry name" value="Sirohaem_synthase_N"/>
</dbReference>
<dbReference type="NCBIfam" id="TIGR01470">
    <property type="entry name" value="cysG_Nterm"/>
    <property type="match status" value="1"/>
</dbReference>
<dbReference type="PANTHER" id="PTHR35330">
    <property type="entry name" value="SIROHEME BIOSYNTHESIS PROTEIN MET8"/>
    <property type="match status" value="1"/>
</dbReference>
<dbReference type="PANTHER" id="PTHR35330:SF1">
    <property type="entry name" value="SIROHEME BIOSYNTHESIS PROTEIN MET8"/>
    <property type="match status" value="1"/>
</dbReference>
<dbReference type="Pfam" id="PF13241">
    <property type="entry name" value="NAD_binding_7"/>
    <property type="match status" value="1"/>
</dbReference>
<dbReference type="SUPFAM" id="SSF51735">
    <property type="entry name" value="NAD(P)-binding Rossmann-fold domains"/>
    <property type="match status" value="1"/>
</dbReference>
<dbReference type="SUPFAM" id="SSF75615">
    <property type="entry name" value="Siroheme synthase middle domains-like"/>
    <property type="match status" value="1"/>
</dbReference>
<comment type="function">
    <text evidence="2">Involved in the archaeal biosynthesis of heme. Catalyzes the oxiation of precorrin-2 into sirohydroclorin.</text>
</comment>
<comment type="catalytic activity">
    <reaction evidence="2">
        <text>precorrin-2 + NAD(+) = sirohydrochlorin + NADH + 2 H(+)</text>
        <dbReference type="Rhea" id="RHEA:15613"/>
        <dbReference type="ChEBI" id="CHEBI:15378"/>
        <dbReference type="ChEBI" id="CHEBI:57540"/>
        <dbReference type="ChEBI" id="CHEBI:57945"/>
        <dbReference type="ChEBI" id="CHEBI:58351"/>
        <dbReference type="ChEBI" id="CHEBI:58827"/>
        <dbReference type="EC" id="1.3.1.76"/>
    </reaction>
</comment>
<comment type="pathway">
    <text>Porphyrin-containing compound metabolism; siroheme biosynthesis; sirohydrochlorin from precorrin-2: step 1/1.</text>
</comment>
<comment type="subunit">
    <text>Homodimer.</text>
</comment>
<comment type="similarity">
    <text evidence="3">Belongs to the precorrin-2 dehydrogenase / sirohydrochlorin ferrochelatase family.</text>
</comment>
<sequence>MTKTNNFLPLMLDLSGRKIVIFGGGSVGERKAKLFSGCADTLVASLEFSQALQELGTSGQVRLVQLDLLTASDSELRGLISGAFLVIPATSNFELNQKITAIARENDILINQVDTLGSVVIPSVIKRGDLVIGISTLGHSPAVSKYTRKQIEGLVTPEYSDMIRLQDELRSYLKQHVAEQRERKEILWKVLESETVWNGFSESYEKAAERAYAIISSYLVNSNR</sequence>
<reference key="1">
    <citation type="journal article" date="2006" name="J. Bacteriol.">
        <title>The Methanosarcina barkeri genome: comparative analysis with Methanosarcina acetivorans and Methanosarcina mazei reveals extensive rearrangement within methanosarcinal genomes.</title>
        <authorList>
            <person name="Maeder D.L."/>
            <person name="Anderson I."/>
            <person name="Brettin T.S."/>
            <person name="Bruce D.C."/>
            <person name="Gilna P."/>
            <person name="Han C.S."/>
            <person name="Lapidus A."/>
            <person name="Metcalf W.W."/>
            <person name="Saunders E."/>
            <person name="Tapia R."/>
            <person name="Sowers K.R."/>
        </authorList>
    </citation>
    <scope>NUCLEOTIDE SEQUENCE [LARGE SCALE GENOMIC DNA]</scope>
    <source>
        <strain>Fusaro / DSM 804</strain>
    </source>
</reference>
<reference key="2">
    <citation type="journal article" date="2010" name="Archaea">
        <title>A novel pathway for the biosynthesis of heme in Archaea: genome-based bioinformatic predictions and experimental evidence.</title>
        <authorList>
            <person name="Storbeck S."/>
            <person name="Rolfes S."/>
            <person name="Raux-Deery E."/>
            <person name="Warren M.J."/>
            <person name="Jahn D."/>
            <person name="Layer G."/>
        </authorList>
    </citation>
    <scope>FUNCTION</scope>
    <scope>CATALYTIC ACTIVITY</scope>
    <scope>SUBUNIT</scope>
</reference>
<proteinExistence type="evidence at protein level"/>
<keyword id="KW-0520">NAD</keyword>
<keyword id="KW-0560">Oxidoreductase</keyword>
<keyword id="KW-0627">Porphyrin biosynthesis</keyword>
<organism>
    <name type="scientific">Methanosarcina barkeri (strain Fusaro / DSM 804)</name>
    <dbReference type="NCBI Taxonomy" id="269797"/>
    <lineage>
        <taxon>Archaea</taxon>
        <taxon>Methanobacteriati</taxon>
        <taxon>Methanobacteriota</taxon>
        <taxon>Stenosarchaea group</taxon>
        <taxon>Methanomicrobia</taxon>
        <taxon>Methanosarcinales</taxon>
        <taxon>Methanosarcinaceae</taxon>
        <taxon>Methanosarcina</taxon>
    </lineage>
</organism>
<accession>Q46CH4</accession>
<name>PC2DH_METBF</name>
<gene>
    <name type="ordered locus">Mbar_A1461</name>
</gene>
<feature type="chain" id="PRO_0000428884" description="Precorrin-2 dehydrogenase">
    <location>
        <begin position="1"/>
        <end position="224"/>
    </location>
</feature>
<feature type="binding site" evidence="1">
    <location>
        <begin position="26"/>
        <end position="27"/>
    </location>
    <ligand>
        <name>NAD(+)</name>
        <dbReference type="ChEBI" id="CHEBI:57540"/>
    </ligand>
</feature>
<feature type="binding site" evidence="1">
    <location>
        <begin position="47"/>
        <end position="50"/>
    </location>
    <ligand>
        <name>NAD(+)</name>
        <dbReference type="ChEBI" id="CHEBI:57540"/>
    </ligand>
</feature>